<feature type="chain" id="PRO_0000218666" description="Colicin-A">
    <location>
        <begin position="1"/>
        <end position="592"/>
    </location>
</feature>
<feature type="transmembrane region" description="Helical" evidence="1">
    <location>
        <begin position="528"/>
        <end position="548"/>
    </location>
</feature>
<feature type="transmembrane region" description="Helical" evidence="1">
    <location>
        <begin position="555"/>
        <end position="575"/>
    </location>
</feature>
<feature type="region of interest" description="Disordered" evidence="2">
    <location>
        <begin position="1"/>
        <end position="57"/>
    </location>
</feature>
<feature type="region of interest" description="Disordered" evidence="2">
    <location>
        <begin position="373"/>
        <end position="395"/>
    </location>
</feature>
<feature type="compositionally biased region" description="Gly residues" evidence="2">
    <location>
        <begin position="1"/>
        <end position="13"/>
    </location>
</feature>
<feature type="compositionally biased region" description="Gly residues" evidence="2">
    <location>
        <begin position="23"/>
        <end position="34"/>
    </location>
</feature>
<feature type="strand" evidence="4">
    <location>
        <begin position="14"/>
        <end position="16"/>
    </location>
</feature>
<feature type="strand" evidence="5">
    <location>
        <begin position="58"/>
        <end position="60"/>
    </location>
</feature>
<feature type="strand" evidence="5">
    <location>
        <begin position="63"/>
        <end position="66"/>
    </location>
</feature>
<feature type="turn" evidence="5">
    <location>
        <begin position="82"/>
        <end position="84"/>
    </location>
</feature>
<feature type="strand" evidence="5">
    <location>
        <begin position="86"/>
        <end position="90"/>
    </location>
</feature>
<feature type="strand" evidence="5">
    <location>
        <begin position="93"/>
        <end position="97"/>
    </location>
</feature>
<comment type="function">
    <text>This colicin is a channel-forming colicin. This class of transmembrane toxins depolarize the cytoplasmic membrane, leading to dissipation of cellular energy.</text>
</comment>
<comment type="function">
    <text>Colicins are polypeptide toxins produced by and active against E.coli and closely related bacteria.</text>
</comment>
<comment type="interaction">
    <interactant intactId="EBI-6559916">
        <id>P04480</id>
    </interactant>
    <interactant intactId="EBI-1120026">
        <id>P19934</id>
        <label>tolA</label>
    </interactant>
    <organismsDiffer>true</organismsDiffer>
    <experiments>6</experiments>
</comment>
<comment type="subcellular location">
    <subcellularLocation>
        <location evidence="3">Cell membrane</location>
        <topology evidence="3">Multi-pass membrane protein</topology>
    </subcellularLocation>
</comment>
<comment type="similarity">
    <text evidence="3">Belongs to the channel forming colicin family.</text>
</comment>
<proteinExistence type="evidence at protein level"/>
<name>CEA_CITFR</name>
<accession>P04480</accession>
<accession>Q51599</accession>
<protein>
    <recommendedName>
        <fullName>Colicin-A</fullName>
    </recommendedName>
</protein>
<reference key="1">
    <citation type="journal article" date="1983" name="J. Mol. Biol.">
        <title>Complete nucleotide sequence of the structural gene for colicin A, a gene translated at non-uniform rate.</title>
        <authorList>
            <person name="Morlon J."/>
            <person name="Lloubes R."/>
            <person name="Varenne S."/>
            <person name="Chartier M."/>
            <person name="Lazdunski C."/>
        </authorList>
    </citation>
    <scope>NUCLEOTIDE SEQUENCE [GENOMIC DNA]</scope>
</reference>
<reference key="2">
    <citation type="journal article" date="1988" name="Mol. Gen. Genet.">
        <title>The complete nucleotide sequence of the colicinogenic plasmid ColA. High extent of homology with ColE1.</title>
        <authorList>
            <person name="Morlon J."/>
            <person name="Chartier M."/>
            <person name="Bidaud M."/>
            <person name="Lazdunski C."/>
        </authorList>
    </citation>
    <scope>NUCLEOTIDE SEQUENCE [GENOMIC DNA]</scope>
</reference>
<reference key="3">
    <citation type="journal article" date="1983" name="EMBO J.">
        <title>Nucleotide sequence of promoter, operator and amino-terminal region of caa, the structural gene of colicin A.</title>
        <authorList>
            <person name="Morlon J."/>
            <person name="Lloubes R."/>
            <person name="Chartier M."/>
            <person name="Bonicel J."/>
            <person name="Lazdunski C."/>
        </authorList>
    </citation>
    <scope>NUCLEOTIDE SEQUENCE [GENOMIC DNA] OF 1-70</scope>
</reference>
<geneLocation type="plasmid">
    <name>ColA-CA31</name>
</geneLocation>
<dbReference type="EMBL" id="X01008">
    <property type="protein sequence ID" value="CAA25503.1"/>
    <property type="molecule type" value="Genomic_DNA"/>
</dbReference>
<dbReference type="EMBL" id="M37402">
    <property type="protein sequence ID" value="AAA72879.1"/>
    <property type="molecule type" value="Genomic_DNA"/>
</dbReference>
<dbReference type="EMBL" id="M26369">
    <property type="protein sequence ID" value="AAA98057.1"/>
    <property type="molecule type" value="Genomic_DNA"/>
</dbReference>
<dbReference type="PIR" id="I40784">
    <property type="entry name" value="IKEBCA"/>
</dbReference>
<dbReference type="RefSeq" id="WP_008323639.1">
    <property type="nucleotide sequence ID" value="NZ_MDCX01000274.1"/>
</dbReference>
<dbReference type="PDB" id="3IAX">
    <property type="method" value="X-ray"/>
    <property type="resolution" value="2.60 A"/>
    <property type="chains" value="B=1-107"/>
</dbReference>
<dbReference type="PDB" id="3QDR">
    <property type="method" value="X-ray"/>
    <property type="resolution" value="2.65 A"/>
    <property type="chains" value="B=53-107"/>
</dbReference>
<dbReference type="PDBsum" id="3IAX"/>
<dbReference type="PDBsum" id="3QDR"/>
<dbReference type="BMRB" id="P04480"/>
<dbReference type="SMR" id="P04480"/>
<dbReference type="IntAct" id="P04480">
    <property type="interactions" value="2"/>
</dbReference>
<dbReference type="MINT" id="P04480"/>
<dbReference type="TCDB" id="1.C.1.3.1">
    <property type="family name" value="the channel-forming colicin (colicin) family"/>
</dbReference>
<dbReference type="EvolutionaryTrace" id="P04480"/>
<dbReference type="GO" id="GO:0005886">
    <property type="term" value="C:plasma membrane"/>
    <property type="evidence" value="ECO:0007669"/>
    <property type="project" value="UniProtKB-SubCell"/>
</dbReference>
<dbReference type="GO" id="GO:0060090">
    <property type="term" value="F:molecular adaptor activity"/>
    <property type="evidence" value="ECO:0000269"/>
    <property type="project" value="DisProt"/>
</dbReference>
<dbReference type="GO" id="GO:0140911">
    <property type="term" value="F:pore-forming activity"/>
    <property type="evidence" value="ECO:0007669"/>
    <property type="project" value="InterPro"/>
</dbReference>
<dbReference type="GO" id="GO:0050829">
    <property type="term" value="P:defense response to Gram-negative bacterium"/>
    <property type="evidence" value="ECO:0007669"/>
    <property type="project" value="InterPro"/>
</dbReference>
<dbReference type="GO" id="GO:0031640">
    <property type="term" value="P:killing of cells of another organism"/>
    <property type="evidence" value="ECO:0007669"/>
    <property type="project" value="UniProtKB-KW"/>
</dbReference>
<dbReference type="DisProt" id="DP01852"/>
<dbReference type="Gene3D" id="2.30.30.970">
    <property type="match status" value="1"/>
</dbReference>
<dbReference type="Gene3D" id="1.10.490.30">
    <property type="entry name" value="Colicin"/>
    <property type="match status" value="1"/>
</dbReference>
<dbReference type="Gene3D" id="1.10.287.620">
    <property type="entry name" value="Helix Hairpins"/>
    <property type="match status" value="1"/>
</dbReference>
<dbReference type="InterPro" id="IPR000293">
    <property type="entry name" value="Channel_colicin_C"/>
</dbReference>
<dbReference type="InterPro" id="IPR038283">
    <property type="entry name" value="Channel_colicin_C_sf"/>
</dbReference>
<dbReference type="InterPro" id="IPR055023">
    <property type="entry name" value="ColA_N"/>
</dbReference>
<dbReference type="Pfam" id="PF22348">
    <property type="entry name" value="ColA_N"/>
    <property type="match status" value="1"/>
</dbReference>
<dbReference type="Pfam" id="PF01024">
    <property type="entry name" value="Colicin"/>
    <property type="match status" value="1"/>
</dbReference>
<dbReference type="PRINTS" id="PR00280">
    <property type="entry name" value="CHANLCOLICIN"/>
</dbReference>
<dbReference type="SUPFAM" id="SSF56837">
    <property type="entry name" value="Colicin"/>
    <property type="match status" value="1"/>
</dbReference>
<dbReference type="PROSITE" id="PS00276">
    <property type="entry name" value="CHANNEL_COLICIN"/>
    <property type="match status" value="1"/>
</dbReference>
<organism>
    <name type="scientific">Citrobacter freundii</name>
    <dbReference type="NCBI Taxonomy" id="546"/>
    <lineage>
        <taxon>Bacteria</taxon>
        <taxon>Pseudomonadati</taxon>
        <taxon>Pseudomonadota</taxon>
        <taxon>Gammaproteobacteria</taxon>
        <taxon>Enterobacterales</taxon>
        <taxon>Enterobacteriaceae</taxon>
        <taxon>Citrobacter</taxon>
        <taxon>Citrobacter freundii complex</taxon>
    </lineage>
</organism>
<gene>
    <name type="primary">caa</name>
</gene>
<keyword id="KW-0002">3D-structure</keyword>
<keyword id="KW-0044">Antibiotic</keyword>
<keyword id="KW-0929">Antimicrobial</keyword>
<keyword id="KW-0078">Bacteriocin</keyword>
<keyword id="KW-1003">Cell membrane</keyword>
<keyword id="KW-0472">Membrane</keyword>
<keyword id="KW-0614">Plasmid</keyword>
<keyword id="KW-0812">Transmembrane</keyword>
<keyword id="KW-1133">Transmembrane helix</keyword>
<sequence length="592" mass="62993">MPGFNYGGKGDGTGWSSERGSGPEPGGGSHGNSGGHDRGDSSNVGNESVTVMKPGDSYNTPWGKVIINAAGQPTMNGTVMTADNSSMVPYGRGFTRVLNSLVNNPVSPAGQNGGKSPVQTAVENYLMVQSGNLPPGYWLSNGKVMTEVREERTSGGGGKNGNERTWTVKVPREVPQLTASYNEGMRIRQEAADRARAEANARALAEEEARAIASGKSKAEFDAGKRVEAAQAAINTAQLNVNNLSGAVSAANQVITQKQAEMTPLKNELAAANQRVQETLKFINDPIRSRIHFNMRSGLIRAQHNVDTKQNEINAAVANRDALNSQLSQANNILQNARNEKSAADAALSAATAQRLQAEAALRAAAEAAEKARQRQAEEAERQRQAMEVAEKAKDERELLEKTSELIAGMGDKIGEHLGDKYKAIAKDIADNIKNFQGKTIRSFDDAMASLNKITANPAMKINKADRDALVNAWKHVDAQDMANKLGNLSKAFKVADVVMKVEKVREKSIEGYETGNWGPLMLEVESWVLSGIASSVALGIFSATLGAYALSLGVPAIAVGIAGILLAAVVGALIDDKFADALNNEIIRPAH</sequence>
<evidence type="ECO:0000255" key="1"/>
<evidence type="ECO:0000256" key="2">
    <source>
        <dbReference type="SAM" id="MobiDB-lite"/>
    </source>
</evidence>
<evidence type="ECO:0000305" key="3"/>
<evidence type="ECO:0007829" key="4">
    <source>
        <dbReference type="PDB" id="3IAX"/>
    </source>
</evidence>
<evidence type="ECO:0007829" key="5">
    <source>
        <dbReference type="PDB" id="3QDR"/>
    </source>
</evidence>